<accession>Q0BIP9</accession>
<keyword id="KW-0521">NADP</keyword>
<keyword id="KW-0560">Oxidoreductase</keyword>
<keyword id="KW-0627">Porphyrin biosynthesis</keyword>
<reference key="1">
    <citation type="submission" date="2006-08" db="EMBL/GenBank/DDBJ databases">
        <title>Complete sequence of chromosome 1 of Burkholderia cepacia AMMD.</title>
        <authorList>
            <person name="Copeland A."/>
            <person name="Lucas S."/>
            <person name="Lapidus A."/>
            <person name="Barry K."/>
            <person name="Detter J.C."/>
            <person name="Glavina del Rio T."/>
            <person name="Hammon N."/>
            <person name="Israni S."/>
            <person name="Pitluck S."/>
            <person name="Bruce D."/>
            <person name="Chain P."/>
            <person name="Malfatti S."/>
            <person name="Shin M."/>
            <person name="Vergez L."/>
            <person name="Schmutz J."/>
            <person name="Larimer F."/>
            <person name="Land M."/>
            <person name="Hauser L."/>
            <person name="Kyrpides N."/>
            <person name="Kim E."/>
            <person name="Parke J."/>
            <person name="Coenye T."/>
            <person name="Konstantinidis K."/>
            <person name="Ramette A."/>
            <person name="Tiedje J."/>
            <person name="Richardson P."/>
        </authorList>
    </citation>
    <scope>NUCLEOTIDE SEQUENCE [LARGE SCALE GENOMIC DNA]</scope>
    <source>
        <strain>ATCC BAA-244 / DSM 16087 / CCUG 44356 / LMG 19182 / AMMD</strain>
    </source>
</reference>
<dbReference type="EC" id="1.2.1.70" evidence="1"/>
<dbReference type="EMBL" id="CP000440">
    <property type="protein sequence ID" value="ABI85974.1"/>
    <property type="molecule type" value="Genomic_DNA"/>
</dbReference>
<dbReference type="RefSeq" id="WP_011655851.1">
    <property type="nucleotide sequence ID" value="NC_008390.1"/>
</dbReference>
<dbReference type="SMR" id="Q0BIP9"/>
<dbReference type="GeneID" id="93084173"/>
<dbReference type="KEGG" id="bam:Bamb_0415"/>
<dbReference type="PATRIC" id="fig|339670.21.peg.1198"/>
<dbReference type="eggNOG" id="COG0373">
    <property type="taxonomic scope" value="Bacteria"/>
</dbReference>
<dbReference type="UniPathway" id="UPA00251">
    <property type="reaction ID" value="UER00316"/>
</dbReference>
<dbReference type="Proteomes" id="UP000000662">
    <property type="component" value="Chromosome 1"/>
</dbReference>
<dbReference type="GO" id="GO:0008883">
    <property type="term" value="F:glutamyl-tRNA reductase activity"/>
    <property type="evidence" value="ECO:0007669"/>
    <property type="project" value="UniProtKB-UniRule"/>
</dbReference>
<dbReference type="GO" id="GO:0050661">
    <property type="term" value="F:NADP binding"/>
    <property type="evidence" value="ECO:0007669"/>
    <property type="project" value="InterPro"/>
</dbReference>
<dbReference type="GO" id="GO:0019353">
    <property type="term" value="P:protoporphyrinogen IX biosynthetic process from glutamate"/>
    <property type="evidence" value="ECO:0007669"/>
    <property type="project" value="TreeGrafter"/>
</dbReference>
<dbReference type="CDD" id="cd05213">
    <property type="entry name" value="NAD_bind_Glutamyl_tRNA_reduct"/>
    <property type="match status" value="1"/>
</dbReference>
<dbReference type="FunFam" id="3.30.460.30:FF:000001">
    <property type="entry name" value="Glutamyl-tRNA reductase"/>
    <property type="match status" value="1"/>
</dbReference>
<dbReference type="FunFam" id="3.40.50.720:FF:000031">
    <property type="entry name" value="Glutamyl-tRNA reductase"/>
    <property type="match status" value="1"/>
</dbReference>
<dbReference type="Gene3D" id="3.30.460.30">
    <property type="entry name" value="Glutamyl-tRNA reductase, N-terminal domain"/>
    <property type="match status" value="1"/>
</dbReference>
<dbReference type="Gene3D" id="3.40.50.720">
    <property type="entry name" value="NAD(P)-binding Rossmann-like Domain"/>
    <property type="match status" value="1"/>
</dbReference>
<dbReference type="HAMAP" id="MF_00087">
    <property type="entry name" value="Glu_tRNA_reductase"/>
    <property type="match status" value="1"/>
</dbReference>
<dbReference type="InterPro" id="IPR000343">
    <property type="entry name" value="4pyrrol_synth_GluRdtase"/>
</dbReference>
<dbReference type="InterPro" id="IPR015896">
    <property type="entry name" value="4pyrrol_synth_GluRdtase_dimer"/>
</dbReference>
<dbReference type="InterPro" id="IPR015895">
    <property type="entry name" value="4pyrrol_synth_GluRdtase_N"/>
</dbReference>
<dbReference type="InterPro" id="IPR018214">
    <property type="entry name" value="GluRdtase_CS"/>
</dbReference>
<dbReference type="InterPro" id="IPR036453">
    <property type="entry name" value="GluRdtase_dimer_dom_sf"/>
</dbReference>
<dbReference type="InterPro" id="IPR036343">
    <property type="entry name" value="GluRdtase_N_sf"/>
</dbReference>
<dbReference type="InterPro" id="IPR036291">
    <property type="entry name" value="NAD(P)-bd_dom_sf"/>
</dbReference>
<dbReference type="InterPro" id="IPR006151">
    <property type="entry name" value="Shikm_DH/Glu-tRNA_Rdtase"/>
</dbReference>
<dbReference type="NCBIfam" id="TIGR01035">
    <property type="entry name" value="hemA"/>
    <property type="match status" value="1"/>
</dbReference>
<dbReference type="PANTHER" id="PTHR43013">
    <property type="entry name" value="GLUTAMYL-TRNA REDUCTASE"/>
    <property type="match status" value="1"/>
</dbReference>
<dbReference type="PANTHER" id="PTHR43013:SF1">
    <property type="entry name" value="GLUTAMYL-TRNA REDUCTASE"/>
    <property type="match status" value="1"/>
</dbReference>
<dbReference type="Pfam" id="PF00745">
    <property type="entry name" value="GlutR_dimer"/>
    <property type="match status" value="1"/>
</dbReference>
<dbReference type="Pfam" id="PF05201">
    <property type="entry name" value="GlutR_N"/>
    <property type="match status" value="1"/>
</dbReference>
<dbReference type="Pfam" id="PF01488">
    <property type="entry name" value="Shikimate_DH"/>
    <property type="match status" value="1"/>
</dbReference>
<dbReference type="PIRSF" id="PIRSF000445">
    <property type="entry name" value="4pyrrol_synth_GluRdtase"/>
    <property type="match status" value="1"/>
</dbReference>
<dbReference type="SUPFAM" id="SSF69742">
    <property type="entry name" value="Glutamyl tRNA-reductase catalytic, N-terminal domain"/>
    <property type="match status" value="1"/>
</dbReference>
<dbReference type="SUPFAM" id="SSF69075">
    <property type="entry name" value="Glutamyl tRNA-reductase dimerization domain"/>
    <property type="match status" value="1"/>
</dbReference>
<dbReference type="SUPFAM" id="SSF51735">
    <property type="entry name" value="NAD(P)-binding Rossmann-fold domains"/>
    <property type="match status" value="1"/>
</dbReference>
<dbReference type="PROSITE" id="PS00747">
    <property type="entry name" value="GLUTR"/>
    <property type="match status" value="1"/>
</dbReference>
<name>HEM1_BURCM</name>
<protein>
    <recommendedName>
        <fullName evidence="1">Glutamyl-tRNA reductase</fullName>
        <shortName evidence="1">GluTR</shortName>
        <ecNumber evidence="1">1.2.1.70</ecNumber>
    </recommendedName>
</protein>
<organism>
    <name type="scientific">Burkholderia ambifaria (strain ATCC BAA-244 / DSM 16087 / CCUG 44356 / LMG 19182 / AMMD)</name>
    <name type="common">Burkholderia cepacia (strain AMMD)</name>
    <dbReference type="NCBI Taxonomy" id="339670"/>
    <lineage>
        <taxon>Bacteria</taxon>
        <taxon>Pseudomonadati</taxon>
        <taxon>Pseudomonadota</taxon>
        <taxon>Betaproteobacteria</taxon>
        <taxon>Burkholderiales</taxon>
        <taxon>Burkholderiaceae</taxon>
        <taxon>Burkholderia</taxon>
        <taxon>Burkholderia cepacia complex</taxon>
    </lineage>
</organism>
<sequence length="432" mass="47507">MQLLTIGINHHTAPVALRERVAFPLEQIKPALVTFKNVFLGPHAPNAPEAAILSTCNRTELYCATDDRAAREGAIRWLSEYHRISVDELAPHVYALPQSEAVRHAFRVASGLDSMVLGETQILGQMKDAVRTATEAGALGTYLNQLFQRTFAVAKEVRGTTEIGAQSVSMAAAAVRLAQRIFETVSDQRVLFIGAGEMIELCATHFAAQSPRELVIANRTAERGQRLAERFNGRAMPLSDLPTRMHEFDIIVSCTASTLPIIGLGAVERAVKARRHRPIFMVDLAVPRDIEPEVGKLKDVFLYTVDDLGAIVREGNASRQAAVAQAETIIETRVQNFMQWLDTRSVVPVIRHMHTQADALRRAEVEKAQKLLARGDDPAAVLEALSQALTNKLIHGPTSALNRVNGADRDSLIDLMRGFYQHAPRSNDQSGH</sequence>
<comment type="function">
    <text evidence="1">Catalyzes the NADPH-dependent reduction of glutamyl-tRNA(Glu) to glutamate 1-semialdehyde (GSA).</text>
</comment>
<comment type="catalytic activity">
    <reaction evidence="1">
        <text>(S)-4-amino-5-oxopentanoate + tRNA(Glu) + NADP(+) = L-glutamyl-tRNA(Glu) + NADPH + H(+)</text>
        <dbReference type="Rhea" id="RHEA:12344"/>
        <dbReference type="Rhea" id="RHEA-COMP:9663"/>
        <dbReference type="Rhea" id="RHEA-COMP:9680"/>
        <dbReference type="ChEBI" id="CHEBI:15378"/>
        <dbReference type="ChEBI" id="CHEBI:57501"/>
        <dbReference type="ChEBI" id="CHEBI:57783"/>
        <dbReference type="ChEBI" id="CHEBI:58349"/>
        <dbReference type="ChEBI" id="CHEBI:78442"/>
        <dbReference type="ChEBI" id="CHEBI:78520"/>
        <dbReference type="EC" id="1.2.1.70"/>
    </reaction>
</comment>
<comment type="pathway">
    <text evidence="1">Porphyrin-containing compound metabolism; protoporphyrin-IX biosynthesis; 5-aminolevulinate from L-glutamyl-tRNA(Glu): step 1/2.</text>
</comment>
<comment type="subunit">
    <text evidence="1">Homodimer.</text>
</comment>
<comment type="domain">
    <text evidence="1">Possesses an unusual extended V-shaped dimeric structure with each monomer consisting of three distinct domains arranged along a curved 'spinal' alpha-helix. The N-terminal catalytic domain specifically recognizes the glutamate moiety of the substrate. The second domain is the NADPH-binding domain, and the third C-terminal domain is responsible for dimerization.</text>
</comment>
<comment type="miscellaneous">
    <text evidence="1">During catalysis, the active site Cys acts as a nucleophile attacking the alpha-carbonyl group of tRNA-bound glutamate with the formation of a thioester intermediate between enzyme and glutamate, and the concomitant release of tRNA(Glu). The thioester intermediate is finally reduced by direct hydride transfer from NADPH, to form the product GSA.</text>
</comment>
<comment type="similarity">
    <text evidence="1">Belongs to the glutamyl-tRNA reductase family.</text>
</comment>
<proteinExistence type="inferred from homology"/>
<evidence type="ECO:0000255" key="1">
    <source>
        <dbReference type="HAMAP-Rule" id="MF_00087"/>
    </source>
</evidence>
<gene>
    <name evidence="1" type="primary">hemA</name>
    <name type="ordered locus">Bamb_0415</name>
</gene>
<feature type="chain" id="PRO_1000004599" description="Glutamyl-tRNA reductase">
    <location>
        <begin position="1"/>
        <end position="432"/>
    </location>
</feature>
<feature type="active site" description="Nucleophile" evidence="1">
    <location>
        <position position="56"/>
    </location>
</feature>
<feature type="binding site" evidence="1">
    <location>
        <begin position="55"/>
        <end position="58"/>
    </location>
    <ligand>
        <name>substrate</name>
    </ligand>
</feature>
<feature type="binding site" evidence="1">
    <location>
        <position position="114"/>
    </location>
    <ligand>
        <name>substrate</name>
    </ligand>
</feature>
<feature type="binding site" evidence="1">
    <location>
        <begin position="119"/>
        <end position="121"/>
    </location>
    <ligand>
        <name>substrate</name>
    </ligand>
</feature>
<feature type="binding site" evidence="1">
    <location>
        <position position="125"/>
    </location>
    <ligand>
        <name>substrate</name>
    </ligand>
</feature>
<feature type="binding site" evidence="1">
    <location>
        <begin position="194"/>
        <end position="199"/>
    </location>
    <ligand>
        <name>NADP(+)</name>
        <dbReference type="ChEBI" id="CHEBI:58349"/>
    </ligand>
</feature>
<feature type="site" description="Important for activity" evidence="1">
    <location>
        <position position="104"/>
    </location>
</feature>